<sequence length="301" mass="34657">MPINIPNGLPAASVLAGEQIFVMTEERATHQDIRPLTLLFLNLMPKKIATEIQYMRKLSNTPLQVNIDLLRVDKHISKNTPQPHLDTFYKDFEEIEGRNYDGMIITGAPLDQIDFSDVTYWDKLEKIITWSKEHVTSTLFSCWGVAAGLKIFYDLPLINRKEKLSGVFLHHTAQSLNPLIRGFDDTFLAPHSRFIDFPSDVIRKHTDLEILADSEITGMFLAATPDRRQVFVTGHPEYDATTLSDEYRRDLAAGKDPKLPENYFPHDDPTQIPSCVWRSHASLLFGNWLNYYVYQITPYKW</sequence>
<protein>
    <recommendedName>
        <fullName evidence="1">Homoserine O-acetyltransferase</fullName>
        <shortName evidence="1 3">HAT</shortName>
        <ecNumber evidence="1 2">2.3.1.31</ecNumber>
    </recommendedName>
    <alternativeName>
        <fullName evidence="1">Homoserine transacetylase</fullName>
        <shortName evidence="1">HTA</shortName>
    </alternativeName>
</protein>
<organism>
    <name type="scientific">Succinatimonas hippei (strain DSM 22608 / JCM 16073 / KCTC 15190 / YIT 12066)</name>
    <dbReference type="NCBI Taxonomy" id="762983"/>
    <lineage>
        <taxon>Bacteria</taxon>
        <taxon>Pseudomonadati</taxon>
        <taxon>Pseudomonadota</taxon>
        <taxon>Gammaproteobacteria</taxon>
        <taxon>Aeromonadales</taxon>
        <taxon>Succinivibrionaceae</taxon>
        <taxon>Succinatimonas</taxon>
    </lineage>
</organism>
<proteinExistence type="evidence at protein level"/>
<keyword id="KW-0012">Acyltransferase</keyword>
<keyword id="KW-0028">Amino-acid biosynthesis</keyword>
<keyword id="KW-0963">Cytoplasm</keyword>
<keyword id="KW-0486">Methionine biosynthesis</keyword>
<keyword id="KW-1185">Reference proteome</keyword>
<keyword id="KW-0808">Transferase</keyword>
<feature type="chain" id="PRO_0000440346" description="Homoserine O-acetyltransferase">
    <location>
        <begin position="1"/>
        <end position="301"/>
    </location>
</feature>
<feature type="active site" description="Acyl-thioester intermediate" evidence="1">
    <location>
        <position position="142"/>
    </location>
</feature>
<feature type="active site" description="Proton acceptor" evidence="1">
    <location>
        <position position="235"/>
    </location>
</feature>
<feature type="active site" evidence="1">
    <location>
        <position position="237"/>
    </location>
</feature>
<feature type="binding site" evidence="1">
    <location>
        <position position="163"/>
    </location>
    <ligand>
        <name>substrate</name>
    </ligand>
</feature>
<feature type="binding site" evidence="1">
    <location>
        <position position="192"/>
    </location>
    <ligand>
        <name>substrate</name>
    </ligand>
</feature>
<feature type="binding site" evidence="1">
    <location>
        <position position="249"/>
    </location>
    <ligand>
        <name>substrate</name>
    </ligand>
</feature>
<feature type="site" description="Important for acyl-CoA specificity" evidence="1">
    <location>
        <position position="111"/>
    </location>
</feature>
<feature type="site" description="Important for substrate specificity" evidence="1">
    <location>
        <position position="192"/>
    </location>
</feature>
<comment type="function">
    <text evidence="1 2">Transfers an acetyl group from acetyl-CoA to L-homoserine, forming acetyl-L-homoserine.</text>
</comment>
<comment type="catalytic activity">
    <reaction evidence="1 2">
        <text>L-homoserine + acetyl-CoA = O-acetyl-L-homoserine + CoA</text>
        <dbReference type="Rhea" id="RHEA:13701"/>
        <dbReference type="ChEBI" id="CHEBI:57287"/>
        <dbReference type="ChEBI" id="CHEBI:57288"/>
        <dbReference type="ChEBI" id="CHEBI:57476"/>
        <dbReference type="ChEBI" id="CHEBI:57716"/>
        <dbReference type="EC" id="2.3.1.31"/>
    </reaction>
</comment>
<comment type="pathway">
    <text evidence="1">Amino-acid biosynthesis; L-methionine biosynthesis via de novo pathway; O-acetyl-L-homoserine from L-homoserine: step 1/1.</text>
</comment>
<comment type="subcellular location">
    <subcellularLocation>
        <location evidence="1">Cytoplasm</location>
    </subcellularLocation>
</comment>
<comment type="similarity">
    <text evidence="1">Belongs to the MetA family.</text>
</comment>
<dbReference type="EC" id="2.3.1.31" evidence="1 2"/>
<dbReference type="EMBL" id="AEVO01000018">
    <property type="protein sequence ID" value="EFY07748.1"/>
    <property type="molecule type" value="Genomic_DNA"/>
</dbReference>
<dbReference type="RefSeq" id="WP_009142658.1">
    <property type="nucleotide sequence ID" value="NZ_GL830956.1"/>
</dbReference>
<dbReference type="SMR" id="E8LIC0"/>
<dbReference type="STRING" id="762983.HMPREF9444_00435"/>
<dbReference type="eggNOG" id="COG1897">
    <property type="taxonomic scope" value="Bacteria"/>
</dbReference>
<dbReference type="HOGENOM" id="CLU_057851_0_1_6"/>
<dbReference type="OrthoDB" id="9772423at2"/>
<dbReference type="UniPathway" id="UPA00051">
    <property type="reaction ID" value="UER00074"/>
</dbReference>
<dbReference type="Proteomes" id="UP000018458">
    <property type="component" value="Unassembled WGS sequence"/>
</dbReference>
<dbReference type="GO" id="GO:0005737">
    <property type="term" value="C:cytoplasm"/>
    <property type="evidence" value="ECO:0007669"/>
    <property type="project" value="UniProtKB-SubCell"/>
</dbReference>
<dbReference type="GO" id="GO:0004414">
    <property type="term" value="F:homoserine O-acetyltransferase activity"/>
    <property type="evidence" value="ECO:0007669"/>
    <property type="project" value="UniProtKB-EC"/>
</dbReference>
<dbReference type="GO" id="GO:0008899">
    <property type="term" value="F:homoserine O-succinyltransferase activity"/>
    <property type="evidence" value="ECO:0007669"/>
    <property type="project" value="UniProtKB-UniRule"/>
</dbReference>
<dbReference type="GO" id="GO:0019281">
    <property type="term" value="P:L-methionine biosynthetic process from homoserine via O-succinyl-L-homoserine and cystathionine"/>
    <property type="evidence" value="ECO:0007669"/>
    <property type="project" value="InterPro"/>
</dbReference>
<dbReference type="CDD" id="cd03131">
    <property type="entry name" value="GATase1_HTS"/>
    <property type="match status" value="1"/>
</dbReference>
<dbReference type="FunFam" id="3.40.50.880:FF:000004">
    <property type="entry name" value="Homoserine O-succinyltransferase"/>
    <property type="match status" value="1"/>
</dbReference>
<dbReference type="Gene3D" id="3.40.50.880">
    <property type="match status" value="1"/>
</dbReference>
<dbReference type="HAMAP" id="MF_00295">
    <property type="entry name" value="MetA_acyltransf"/>
    <property type="match status" value="1"/>
</dbReference>
<dbReference type="InterPro" id="IPR029062">
    <property type="entry name" value="Class_I_gatase-like"/>
</dbReference>
<dbReference type="InterPro" id="IPR005697">
    <property type="entry name" value="HST_MetA"/>
</dbReference>
<dbReference type="InterPro" id="IPR033752">
    <property type="entry name" value="MetA_family"/>
</dbReference>
<dbReference type="NCBIfam" id="TIGR01001">
    <property type="entry name" value="metA"/>
    <property type="match status" value="1"/>
</dbReference>
<dbReference type="PANTHER" id="PTHR20919">
    <property type="entry name" value="HOMOSERINE O-SUCCINYLTRANSFERASE"/>
    <property type="match status" value="1"/>
</dbReference>
<dbReference type="PANTHER" id="PTHR20919:SF0">
    <property type="entry name" value="HOMOSERINE O-SUCCINYLTRANSFERASE"/>
    <property type="match status" value="1"/>
</dbReference>
<dbReference type="Pfam" id="PF04204">
    <property type="entry name" value="HTS"/>
    <property type="match status" value="1"/>
</dbReference>
<dbReference type="PIRSF" id="PIRSF000450">
    <property type="entry name" value="H_ser_succinyltr"/>
    <property type="match status" value="1"/>
</dbReference>
<dbReference type="SUPFAM" id="SSF52317">
    <property type="entry name" value="Class I glutamine amidotransferase-like"/>
    <property type="match status" value="1"/>
</dbReference>
<name>METAA_SUCHY</name>
<gene>
    <name evidence="1 3" type="primary">metAA</name>
    <name evidence="4" type="synonym">metA</name>
    <name evidence="4" type="ORF">HMPREF9444_00435</name>
</gene>
<accession>E8LIC0</accession>
<reference key="1">
    <citation type="submission" date="2011-01" db="EMBL/GenBank/DDBJ databases">
        <authorList>
            <person name="Weinstock G."/>
            <person name="Sodergren E."/>
            <person name="Clifton S."/>
            <person name="Fulton L."/>
            <person name="Fulton B."/>
            <person name="Courtney L."/>
            <person name="Fronick C."/>
            <person name="Harrison M."/>
            <person name="Strong C."/>
            <person name="Farmer C."/>
            <person name="Delahaunty K."/>
            <person name="Markovic C."/>
            <person name="Hall O."/>
            <person name="Minx P."/>
            <person name="Tomlinson C."/>
            <person name="Mitreva M."/>
            <person name="Hou S."/>
            <person name="Chen J."/>
            <person name="Wollam A."/>
            <person name="Pepin K.H."/>
            <person name="Johnson M."/>
            <person name="Bhonagiri V."/>
            <person name="Zhang X."/>
            <person name="Suruliraj S."/>
            <person name="Warren W."/>
            <person name="Chinwalla A."/>
            <person name="Mardis E.R."/>
            <person name="Wilson R.K."/>
        </authorList>
    </citation>
    <scope>NUCLEOTIDE SEQUENCE [LARGE SCALE GENOMIC DNA]</scope>
    <source>
        <strain>DSM 22608 / JCM 16073 / KCTC 15190 / YIT 12066</strain>
    </source>
</reference>
<reference key="2">
    <citation type="journal article" date="2017" name="Nat. Chem. Biol.">
        <title>Parallel evolution of non-homologous isofunctional enzymes in methionine biosynthesis.</title>
        <authorList>
            <person name="Bastard K."/>
            <person name="Perret A."/>
            <person name="Mariage A."/>
            <person name="Bessonnet T."/>
            <person name="Pinet-Turpault A."/>
            <person name="Petit J.L."/>
            <person name="Darii E."/>
            <person name="Bazire P."/>
            <person name="Vergne-Vaxelaire C."/>
            <person name="Brewee C."/>
            <person name="Debard A."/>
            <person name="Pellouin V."/>
            <person name="Besnard-Gonnet M."/>
            <person name="Artiguenave F."/>
            <person name="Medigue C."/>
            <person name="Vallenet D."/>
            <person name="Danchin A."/>
            <person name="Zaparucha A."/>
            <person name="Weissenbach J."/>
            <person name="Salanoubat M."/>
            <person name="de Berardinis V."/>
        </authorList>
    </citation>
    <scope>FUNCTION</scope>
    <scope>CATALYTIC ACTIVITY</scope>
</reference>
<evidence type="ECO:0000255" key="1">
    <source>
        <dbReference type="HAMAP-Rule" id="MF_00295"/>
    </source>
</evidence>
<evidence type="ECO:0000269" key="2">
    <source>
    </source>
</evidence>
<evidence type="ECO:0000303" key="3">
    <source>
    </source>
</evidence>
<evidence type="ECO:0000312" key="4">
    <source>
        <dbReference type="EMBL" id="EFY07748.1"/>
    </source>
</evidence>